<proteinExistence type="inferred from homology"/>
<dbReference type="EMBL" id="CP001099">
    <property type="protein sequence ID" value="ACF12036.1"/>
    <property type="molecule type" value="Genomic_DNA"/>
</dbReference>
<dbReference type="RefSeq" id="WP_012502869.1">
    <property type="nucleotide sequence ID" value="NC_011027.1"/>
</dbReference>
<dbReference type="SMR" id="B3QQ33"/>
<dbReference type="STRING" id="517417.Cpar_1640"/>
<dbReference type="KEGG" id="cpc:Cpar_1640"/>
<dbReference type="eggNOG" id="COG0375">
    <property type="taxonomic scope" value="Bacteria"/>
</dbReference>
<dbReference type="HOGENOM" id="CLU_126929_0_0_10"/>
<dbReference type="OrthoDB" id="9800361at2"/>
<dbReference type="Proteomes" id="UP000008811">
    <property type="component" value="Chromosome"/>
</dbReference>
<dbReference type="GO" id="GO:0016151">
    <property type="term" value="F:nickel cation binding"/>
    <property type="evidence" value="ECO:0007669"/>
    <property type="project" value="UniProtKB-UniRule"/>
</dbReference>
<dbReference type="GO" id="GO:0008270">
    <property type="term" value="F:zinc ion binding"/>
    <property type="evidence" value="ECO:0007669"/>
    <property type="project" value="UniProtKB-UniRule"/>
</dbReference>
<dbReference type="GO" id="GO:0051604">
    <property type="term" value="P:protein maturation"/>
    <property type="evidence" value="ECO:0007669"/>
    <property type="project" value="InterPro"/>
</dbReference>
<dbReference type="GO" id="GO:0036211">
    <property type="term" value="P:protein modification process"/>
    <property type="evidence" value="ECO:0007669"/>
    <property type="project" value="UniProtKB-UniRule"/>
</dbReference>
<dbReference type="Gene3D" id="3.30.2320.80">
    <property type="match status" value="1"/>
</dbReference>
<dbReference type="HAMAP" id="MF_00213">
    <property type="entry name" value="HypA_HybF"/>
    <property type="match status" value="1"/>
</dbReference>
<dbReference type="InterPro" id="IPR020538">
    <property type="entry name" value="Hydgase_Ni_incorp_HypA/HybF_CS"/>
</dbReference>
<dbReference type="InterPro" id="IPR000688">
    <property type="entry name" value="HypA/HybF"/>
</dbReference>
<dbReference type="NCBIfam" id="TIGR00100">
    <property type="entry name" value="hypA"/>
    <property type="match status" value="1"/>
</dbReference>
<dbReference type="PANTHER" id="PTHR34535">
    <property type="entry name" value="HYDROGENASE MATURATION FACTOR HYPA"/>
    <property type="match status" value="1"/>
</dbReference>
<dbReference type="PANTHER" id="PTHR34535:SF3">
    <property type="entry name" value="HYDROGENASE MATURATION FACTOR HYPA"/>
    <property type="match status" value="1"/>
</dbReference>
<dbReference type="Pfam" id="PF01155">
    <property type="entry name" value="HypA"/>
    <property type="match status" value="1"/>
</dbReference>
<dbReference type="PIRSF" id="PIRSF004761">
    <property type="entry name" value="Hydrgn_mat_HypA"/>
    <property type="match status" value="1"/>
</dbReference>
<dbReference type="PROSITE" id="PS01249">
    <property type="entry name" value="HYPA"/>
    <property type="match status" value="1"/>
</dbReference>
<gene>
    <name evidence="1" type="primary">hypA</name>
    <name type="ordered locus">Cpar_1640</name>
</gene>
<reference key="1">
    <citation type="submission" date="2008-06" db="EMBL/GenBank/DDBJ databases">
        <title>Complete sequence of Chlorobaculum parvum NCIB 8327.</title>
        <authorList>
            <consortium name="US DOE Joint Genome Institute"/>
            <person name="Lucas S."/>
            <person name="Copeland A."/>
            <person name="Lapidus A."/>
            <person name="Glavina del Rio T."/>
            <person name="Dalin E."/>
            <person name="Tice H."/>
            <person name="Bruce D."/>
            <person name="Goodwin L."/>
            <person name="Pitluck S."/>
            <person name="Schmutz J."/>
            <person name="Larimer F."/>
            <person name="Land M."/>
            <person name="Hauser L."/>
            <person name="Kyrpides N."/>
            <person name="Mikhailova N."/>
            <person name="Zhao F."/>
            <person name="Li T."/>
            <person name="Liu Z."/>
            <person name="Overmann J."/>
            <person name="Bryant D.A."/>
            <person name="Richardson P."/>
        </authorList>
    </citation>
    <scope>NUCLEOTIDE SEQUENCE [LARGE SCALE GENOMIC DNA]</scope>
    <source>
        <strain>DSM 263 / NCIMB 8327</strain>
    </source>
</reference>
<organism>
    <name type="scientific">Chlorobaculum parvum (strain DSM 263 / NCIMB 8327)</name>
    <name type="common">Chlorobium vibrioforme subsp. thiosulfatophilum</name>
    <dbReference type="NCBI Taxonomy" id="517417"/>
    <lineage>
        <taxon>Bacteria</taxon>
        <taxon>Pseudomonadati</taxon>
        <taxon>Chlorobiota</taxon>
        <taxon>Chlorobiia</taxon>
        <taxon>Chlorobiales</taxon>
        <taxon>Chlorobiaceae</taxon>
        <taxon>Chlorobaculum</taxon>
    </lineage>
</organism>
<keyword id="KW-0479">Metal-binding</keyword>
<keyword id="KW-0533">Nickel</keyword>
<keyword id="KW-0862">Zinc</keyword>
<evidence type="ECO:0000255" key="1">
    <source>
        <dbReference type="HAMAP-Rule" id="MF_00213"/>
    </source>
</evidence>
<name>HYPA_CHLP8</name>
<comment type="function">
    <text evidence="1">Involved in the maturation of [NiFe] hydrogenases. Required for nickel insertion into the metal center of the hydrogenase.</text>
</comment>
<comment type="similarity">
    <text evidence="1">Belongs to the HypA/HybF family.</text>
</comment>
<feature type="chain" id="PRO_1000099888" description="Hydrogenase maturation factor HypA">
    <location>
        <begin position="1"/>
        <end position="113"/>
    </location>
</feature>
<feature type="binding site" evidence="1">
    <location>
        <position position="2"/>
    </location>
    <ligand>
        <name>Ni(2+)</name>
        <dbReference type="ChEBI" id="CHEBI:49786"/>
    </ligand>
</feature>
<feature type="binding site" evidence="1">
    <location>
        <position position="73"/>
    </location>
    <ligand>
        <name>Zn(2+)</name>
        <dbReference type="ChEBI" id="CHEBI:29105"/>
    </ligand>
</feature>
<feature type="binding site" evidence="1">
    <location>
        <position position="76"/>
    </location>
    <ligand>
        <name>Zn(2+)</name>
        <dbReference type="ChEBI" id="CHEBI:29105"/>
    </ligand>
</feature>
<feature type="binding site" evidence="1">
    <location>
        <position position="89"/>
    </location>
    <ligand>
        <name>Zn(2+)</name>
        <dbReference type="ChEBI" id="CHEBI:29105"/>
    </ligand>
</feature>
<feature type="binding site" evidence="1">
    <location>
        <position position="92"/>
    </location>
    <ligand>
        <name>Zn(2+)</name>
        <dbReference type="ChEBI" id="CHEBI:29105"/>
    </ligand>
</feature>
<accession>B3QQ33</accession>
<protein>
    <recommendedName>
        <fullName evidence="1">Hydrogenase maturation factor HypA</fullName>
    </recommendedName>
</protein>
<sequence length="113" mass="12154">MHEMSIAMSVIDAVTEKARQEGCSKVTGIELVVGHLSGVEVESLKFCFSAACRDTPADGAELVIEECEAVGRCEACGETFPITSFYAKCPSCAQFRVQIESGQELSVRSITIE</sequence>